<accession>O28272</accession>
<proteinExistence type="inferred from homology"/>
<keyword id="KW-0521">NADP</keyword>
<keyword id="KW-0560">Oxidoreductase</keyword>
<keyword id="KW-1185">Reference proteome</keyword>
<keyword id="KW-0686">Riboflavin biosynthesis</keyword>
<gene>
    <name type="ordered locus">AF_2007</name>
</gene>
<protein>
    <recommendedName>
        <fullName>2,5-diamino-6-ribosylamino-4(3H)-pyrimidinone 5'-phosphate reductase</fullName>
        <shortName>DAROPP reductase</shortName>
        <shortName>DARP reductase</shortName>
        <ecNumber>1.1.1.302</ecNumber>
    </recommendedName>
    <alternativeName>
        <fullName>2,5-diamino-6-(5-phospho-D-ribosylamino)pyrimidin-4(3H)-one reductase</fullName>
    </alternativeName>
    <alternativeName>
        <fullName>2,5-diamino-6-ribitylamino-4(3H)-pyrimidinone 5'-phosphate synthase</fullName>
        <shortName>DARIPP synthase</shortName>
    </alternativeName>
</protein>
<name>RIB7_ARCFU</name>
<dbReference type="EC" id="1.1.1.302"/>
<dbReference type="EMBL" id="AE000782">
    <property type="protein sequence ID" value="AAB89247.1"/>
    <property type="molecule type" value="Genomic_DNA"/>
</dbReference>
<dbReference type="PIR" id="F69500">
    <property type="entry name" value="F69500"/>
</dbReference>
<dbReference type="RefSeq" id="WP_010879499.1">
    <property type="nucleotide sequence ID" value="NC_000917.1"/>
</dbReference>
<dbReference type="SMR" id="O28272"/>
<dbReference type="STRING" id="224325.AF_2007"/>
<dbReference type="PaxDb" id="224325-AF_2007"/>
<dbReference type="EnsemblBacteria" id="AAB89247">
    <property type="protein sequence ID" value="AAB89247"/>
    <property type="gene ID" value="AF_2007"/>
</dbReference>
<dbReference type="KEGG" id="afu:AF_2007"/>
<dbReference type="eggNOG" id="arCOG01484">
    <property type="taxonomic scope" value="Archaea"/>
</dbReference>
<dbReference type="HOGENOM" id="CLU_036590_4_1_2"/>
<dbReference type="OrthoDB" id="10178at2157"/>
<dbReference type="PhylomeDB" id="O28272"/>
<dbReference type="UniPathway" id="UPA00275"/>
<dbReference type="Proteomes" id="UP000002199">
    <property type="component" value="Chromosome"/>
</dbReference>
<dbReference type="GO" id="GO:0008703">
    <property type="term" value="F:5-amino-6-(5-phosphoribosylamino)uracil reductase activity"/>
    <property type="evidence" value="ECO:0007669"/>
    <property type="project" value="InterPro"/>
</dbReference>
<dbReference type="GO" id="GO:0050661">
    <property type="term" value="F:NADP binding"/>
    <property type="evidence" value="ECO:0007669"/>
    <property type="project" value="InterPro"/>
</dbReference>
<dbReference type="GO" id="GO:0009231">
    <property type="term" value="P:riboflavin biosynthetic process"/>
    <property type="evidence" value="ECO:0007669"/>
    <property type="project" value="UniProtKB-UniPathway"/>
</dbReference>
<dbReference type="Gene3D" id="3.40.430.10">
    <property type="entry name" value="Dihydrofolate Reductase, subunit A"/>
    <property type="match status" value="1"/>
</dbReference>
<dbReference type="InterPro" id="IPR024072">
    <property type="entry name" value="DHFR-like_dom_sf"/>
</dbReference>
<dbReference type="InterPro" id="IPR006401">
    <property type="entry name" value="Rib_reduct_arc"/>
</dbReference>
<dbReference type="InterPro" id="IPR011549">
    <property type="entry name" value="RibD_C"/>
</dbReference>
<dbReference type="InterPro" id="IPR002734">
    <property type="entry name" value="RibDG_C"/>
</dbReference>
<dbReference type="InterPro" id="IPR050765">
    <property type="entry name" value="Riboflavin_Biosynth_HTPR"/>
</dbReference>
<dbReference type="NCBIfam" id="TIGR01508">
    <property type="entry name" value="rib_reduct_arch"/>
    <property type="match status" value="1"/>
</dbReference>
<dbReference type="NCBIfam" id="TIGR00227">
    <property type="entry name" value="ribD_Cterm"/>
    <property type="match status" value="1"/>
</dbReference>
<dbReference type="PANTHER" id="PTHR38011:SF7">
    <property type="entry name" value="2,5-DIAMINO-6-RIBOSYLAMINO-4(3H)-PYRIMIDINONE 5'-PHOSPHATE REDUCTASE"/>
    <property type="match status" value="1"/>
</dbReference>
<dbReference type="PANTHER" id="PTHR38011">
    <property type="entry name" value="DIHYDROFOLATE REDUCTASE FAMILY PROTEIN (AFU_ORTHOLOGUE AFUA_8G06820)"/>
    <property type="match status" value="1"/>
</dbReference>
<dbReference type="Pfam" id="PF01872">
    <property type="entry name" value="RibD_C"/>
    <property type="match status" value="1"/>
</dbReference>
<dbReference type="SUPFAM" id="SSF53597">
    <property type="entry name" value="Dihydrofolate reductase-like"/>
    <property type="match status" value="1"/>
</dbReference>
<sequence>MRPYVFVNVAASLDGKISDESRKQLRISCEEDLRIVDRLRAESDAIMVGIGTVLADDPRLTVKSAELREKRQKDGKEPNPLRVVVDSRCRVPLTARILNDEARTLVAVSRIAPEEKVREVKKVAEVAVFGEERVELSALLEFLHRKGVRRLMVEGGGTLISSLISQNLVDEIRIYYGPIFIGGRDSPTVCDGESFLKKCRIEKIERIGEGFAVTARFNR</sequence>
<reference key="1">
    <citation type="journal article" date="1997" name="Nature">
        <title>The complete genome sequence of the hyperthermophilic, sulphate-reducing archaeon Archaeoglobus fulgidus.</title>
        <authorList>
            <person name="Klenk H.-P."/>
            <person name="Clayton R.A."/>
            <person name="Tomb J.-F."/>
            <person name="White O."/>
            <person name="Nelson K.E."/>
            <person name="Ketchum K.A."/>
            <person name="Dodson R.J."/>
            <person name="Gwinn M.L."/>
            <person name="Hickey E.K."/>
            <person name="Peterson J.D."/>
            <person name="Richardson D.L."/>
            <person name="Kerlavage A.R."/>
            <person name="Graham D.E."/>
            <person name="Kyrpides N.C."/>
            <person name="Fleischmann R.D."/>
            <person name="Quackenbush J."/>
            <person name="Lee N.H."/>
            <person name="Sutton G.G."/>
            <person name="Gill S.R."/>
            <person name="Kirkness E.F."/>
            <person name="Dougherty B.A."/>
            <person name="McKenney K."/>
            <person name="Adams M.D."/>
            <person name="Loftus B.J."/>
            <person name="Peterson S.N."/>
            <person name="Reich C.I."/>
            <person name="McNeil L.K."/>
            <person name="Badger J.H."/>
            <person name="Glodek A."/>
            <person name="Zhou L."/>
            <person name="Overbeek R."/>
            <person name="Gocayne J.D."/>
            <person name="Weidman J.F."/>
            <person name="McDonald L.A."/>
            <person name="Utterback T.R."/>
            <person name="Cotton M.D."/>
            <person name="Spriggs T."/>
            <person name="Artiach P."/>
            <person name="Kaine B.P."/>
            <person name="Sykes S.M."/>
            <person name="Sadow P.W."/>
            <person name="D'Andrea K.P."/>
            <person name="Bowman C."/>
            <person name="Fujii C."/>
            <person name="Garland S.A."/>
            <person name="Mason T.M."/>
            <person name="Olsen G.J."/>
            <person name="Fraser C.M."/>
            <person name="Smith H.O."/>
            <person name="Woese C.R."/>
            <person name="Venter J.C."/>
        </authorList>
    </citation>
    <scope>NUCLEOTIDE SEQUENCE [LARGE SCALE GENOMIC DNA]</scope>
    <source>
        <strain>ATCC 49558 / DSM 4304 / JCM 9628 / NBRC 100126 / VC-16</strain>
    </source>
</reference>
<evidence type="ECO:0000250" key="1"/>
<evidence type="ECO:0000305" key="2"/>
<feature type="chain" id="PRO_0000135943" description="2,5-diamino-6-ribosylamino-4(3H)-pyrimidinone 5'-phosphate reductase">
    <location>
        <begin position="1"/>
        <end position="219"/>
    </location>
</feature>
<feature type="binding site" evidence="1">
    <location>
        <position position="52"/>
    </location>
    <ligand>
        <name>NADP(+)</name>
        <dbReference type="ChEBI" id="CHEBI:58349"/>
    </ligand>
</feature>
<feature type="binding site" evidence="1">
    <location>
        <position position="56"/>
    </location>
    <ligand>
        <name>NADP(+)</name>
        <dbReference type="ChEBI" id="CHEBI:58349"/>
    </ligand>
</feature>
<feature type="binding site" evidence="1">
    <location>
        <begin position="87"/>
        <end position="90"/>
    </location>
    <ligand>
        <name>NADP(+)</name>
        <dbReference type="ChEBI" id="CHEBI:58349"/>
    </ligand>
</feature>
<feature type="binding site" evidence="1">
    <location>
        <position position="134"/>
    </location>
    <ligand>
        <name>NADP(+)</name>
        <dbReference type="ChEBI" id="CHEBI:58349"/>
    </ligand>
</feature>
<feature type="binding site" evidence="1">
    <location>
        <begin position="156"/>
        <end position="159"/>
    </location>
    <ligand>
        <name>NADP(+)</name>
        <dbReference type="ChEBI" id="CHEBI:58349"/>
    </ligand>
</feature>
<organism>
    <name type="scientific">Archaeoglobus fulgidus (strain ATCC 49558 / DSM 4304 / JCM 9628 / NBRC 100126 / VC-16)</name>
    <dbReference type="NCBI Taxonomy" id="224325"/>
    <lineage>
        <taxon>Archaea</taxon>
        <taxon>Methanobacteriati</taxon>
        <taxon>Methanobacteriota</taxon>
        <taxon>Archaeoglobi</taxon>
        <taxon>Archaeoglobales</taxon>
        <taxon>Archaeoglobaceae</taxon>
        <taxon>Archaeoglobus</taxon>
    </lineage>
</organism>
<comment type="function">
    <text evidence="1">Catalyzes an early step in riboflavin biosynthesis, the NADPH-dependent reduction of the ribose side chain of 2,5-diamino-6-ribosylamino-4(3H)-pyrimidinone 5'-phosphate, yielding 2,5-diamino-6-ribitylamino-4(3H)-pyrimidinone 5'-phosphate.</text>
</comment>
<comment type="catalytic activity">
    <reaction>
        <text>2,5-diamino-6-(1-D-ribitylamino)pyrimidin-4(3H)-one 5'-phosphate + NADP(+) = 2,5-diamino-6-(1-D-ribosylamino)pyrimidin-4(3H)-one 5'-phosphate + NADPH + H(+)</text>
        <dbReference type="Rhea" id="RHEA:27278"/>
        <dbReference type="ChEBI" id="CHEBI:15378"/>
        <dbReference type="ChEBI" id="CHEBI:57783"/>
        <dbReference type="ChEBI" id="CHEBI:58349"/>
        <dbReference type="ChEBI" id="CHEBI:58890"/>
        <dbReference type="ChEBI" id="CHEBI:59545"/>
        <dbReference type="EC" id="1.1.1.302"/>
    </reaction>
</comment>
<comment type="catalytic activity">
    <reaction>
        <text>2,5-diamino-6-(1-D-ribitylamino)pyrimidin-4(3H)-one 5'-phosphate + NAD(+) = 2,5-diamino-6-(1-D-ribosylamino)pyrimidin-4(3H)-one 5'-phosphate + NADH + H(+)</text>
        <dbReference type="Rhea" id="RHEA:27274"/>
        <dbReference type="ChEBI" id="CHEBI:15378"/>
        <dbReference type="ChEBI" id="CHEBI:57540"/>
        <dbReference type="ChEBI" id="CHEBI:57945"/>
        <dbReference type="ChEBI" id="CHEBI:58890"/>
        <dbReference type="ChEBI" id="CHEBI:59545"/>
        <dbReference type="EC" id="1.1.1.302"/>
    </reaction>
</comment>
<comment type="pathway">
    <text>Cofactor biosynthesis; riboflavin biosynthesis.</text>
</comment>
<comment type="subunit">
    <text evidence="1">Homodimer.</text>
</comment>
<comment type="similarity">
    <text evidence="2">Belongs to the HTP reductase family.</text>
</comment>